<protein>
    <recommendedName>
        <fullName evidence="1">Trigger factor</fullName>
        <shortName evidence="1">TF</shortName>
        <ecNumber evidence="1">5.2.1.8</ecNumber>
    </recommendedName>
    <alternativeName>
        <fullName evidence="1">PPIase</fullName>
    </alternativeName>
</protein>
<sequence>MKSAVETLSPTRVKFTVEVGFDELQPTVAAAYRKVAEQVRVPGFRPGKVPPPIIDRRIGRGVVLEQALNDAIPQFYGQAVDEAAVAVISQPEIEVTNFADGEGLTFTAEVDVRPTIELPDPESITVTVDPVTVSDADVDAELAALADRFATLKPVDRPARRGDFVTIDMTVRLDGEVLEDGTVTGASYEVGSAQLVEGLDEALEGLTAGQSAEFDAPLAGPYAGRTARAEVTVRAVREKQVPALDDAFAQQASEFDTLEELRAHIRERIGRTRRIQQHVQARERLLQTLLDSLDIPVPERIVDAEVRSRAEQLRRYAEARGMDAEGLLAQQGESLHDHEAHVRADVERELRVQFLLDTVVAREQLQLQEAELTDYLIQRATRLGVSPDDYANQLVRTNTVPLAVADALRGKALTYLLQRVRVVDTTGAPVNLEGGSTPAAEAEPAVSEA</sequence>
<name>TIG_ACIC1</name>
<dbReference type="EC" id="5.2.1.8" evidence="1"/>
<dbReference type="EMBL" id="CP000481">
    <property type="protein sequence ID" value="ABK52509.1"/>
    <property type="molecule type" value="Genomic_DNA"/>
</dbReference>
<dbReference type="RefSeq" id="WP_011719572.1">
    <property type="nucleotide sequence ID" value="NC_008578.1"/>
</dbReference>
<dbReference type="SMR" id="A0LSU9"/>
<dbReference type="FunCoup" id="A0LSU9">
    <property type="interactions" value="263"/>
</dbReference>
<dbReference type="STRING" id="351607.Acel_0736"/>
<dbReference type="KEGG" id="ace:Acel_0736"/>
<dbReference type="eggNOG" id="COG0544">
    <property type="taxonomic scope" value="Bacteria"/>
</dbReference>
<dbReference type="HOGENOM" id="CLU_033058_3_0_11"/>
<dbReference type="InParanoid" id="A0LSU9"/>
<dbReference type="OrthoDB" id="9767721at2"/>
<dbReference type="Proteomes" id="UP000008221">
    <property type="component" value="Chromosome"/>
</dbReference>
<dbReference type="GO" id="GO:0005737">
    <property type="term" value="C:cytoplasm"/>
    <property type="evidence" value="ECO:0007669"/>
    <property type="project" value="UniProtKB-SubCell"/>
</dbReference>
<dbReference type="GO" id="GO:0003755">
    <property type="term" value="F:peptidyl-prolyl cis-trans isomerase activity"/>
    <property type="evidence" value="ECO:0007669"/>
    <property type="project" value="UniProtKB-UniRule"/>
</dbReference>
<dbReference type="GO" id="GO:0044183">
    <property type="term" value="F:protein folding chaperone"/>
    <property type="evidence" value="ECO:0007669"/>
    <property type="project" value="TreeGrafter"/>
</dbReference>
<dbReference type="GO" id="GO:0043022">
    <property type="term" value="F:ribosome binding"/>
    <property type="evidence" value="ECO:0007669"/>
    <property type="project" value="TreeGrafter"/>
</dbReference>
<dbReference type="GO" id="GO:0051083">
    <property type="term" value="P:'de novo' cotranslational protein folding"/>
    <property type="evidence" value="ECO:0007669"/>
    <property type="project" value="TreeGrafter"/>
</dbReference>
<dbReference type="GO" id="GO:0051301">
    <property type="term" value="P:cell division"/>
    <property type="evidence" value="ECO:0007669"/>
    <property type="project" value="UniProtKB-KW"/>
</dbReference>
<dbReference type="GO" id="GO:0061077">
    <property type="term" value="P:chaperone-mediated protein folding"/>
    <property type="evidence" value="ECO:0007669"/>
    <property type="project" value="TreeGrafter"/>
</dbReference>
<dbReference type="GO" id="GO:0015031">
    <property type="term" value="P:protein transport"/>
    <property type="evidence" value="ECO:0007669"/>
    <property type="project" value="UniProtKB-UniRule"/>
</dbReference>
<dbReference type="GO" id="GO:0043335">
    <property type="term" value="P:protein unfolding"/>
    <property type="evidence" value="ECO:0007669"/>
    <property type="project" value="TreeGrafter"/>
</dbReference>
<dbReference type="Gene3D" id="3.10.50.40">
    <property type="match status" value="1"/>
</dbReference>
<dbReference type="Gene3D" id="3.30.70.1050">
    <property type="entry name" value="Trigger factor ribosome-binding domain"/>
    <property type="match status" value="1"/>
</dbReference>
<dbReference type="Gene3D" id="1.10.3120.10">
    <property type="entry name" value="Trigger factor, C-terminal domain"/>
    <property type="match status" value="1"/>
</dbReference>
<dbReference type="HAMAP" id="MF_00303">
    <property type="entry name" value="Trigger_factor_Tig"/>
    <property type="match status" value="1"/>
</dbReference>
<dbReference type="InterPro" id="IPR046357">
    <property type="entry name" value="PPIase_dom_sf"/>
</dbReference>
<dbReference type="InterPro" id="IPR001179">
    <property type="entry name" value="PPIase_FKBP_dom"/>
</dbReference>
<dbReference type="InterPro" id="IPR005215">
    <property type="entry name" value="Trig_fac"/>
</dbReference>
<dbReference type="InterPro" id="IPR008880">
    <property type="entry name" value="Trigger_fac_C"/>
</dbReference>
<dbReference type="InterPro" id="IPR037041">
    <property type="entry name" value="Trigger_fac_C_sf"/>
</dbReference>
<dbReference type="InterPro" id="IPR008881">
    <property type="entry name" value="Trigger_fac_ribosome-bd_bac"/>
</dbReference>
<dbReference type="InterPro" id="IPR036611">
    <property type="entry name" value="Trigger_fac_ribosome-bd_sf"/>
</dbReference>
<dbReference type="InterPro" id="IPR027304">
    <property type="entry name" value="Trigger_fact/SurA_dom_sf"/>
</dbReference>
<dbReference type="NCBIfam" id="TIGR00115">
    <property type="entry name" value="tig"/>
    <property type="match status" value="1"/>
</dbReference>
<dbReference type="PANTHER" id="PTHR30560">
    <property type="entry name" value="TRIGGER FACTOR CHAPERONE AND PEPTIDYL-PROLYL CIS/TRANS ISOMERASE"/>
    <property type="match status" value="1"/>
</dbReference>
<dbReference type="PANTHER" id="PTHR30560:SF3">
    <property type="entry name" value="TRIGGER FACTOR-LIKE PROTEIN TIG, CHLOROPLASTIC"/>
    <property type="match status" value="1"/>
</dbReference>
<dbReference type="Pfam" id="PF00254">
    <property type="entry name" value="FKBP_C"/>
    <property type="match status" value="1"/>
</dbReference>
<dbReference type="Pfam" id="PF05698">
    <property type="entry name" value="Trigger_C"/>
    <property type="match status" value="1"/>
</dbReference>
<dbReference type="Pfam" id="PF05697">
    <property type="entry name" value="Trigger_N"/>
    <property type="match status" value="1"/>
</dbReference>
<dbReference type="PIRSF" id="PIRSF003095">
    <property type="entry name" value="Trigger_factor"/>
    <property type="match status" value="1"/>
</dbReference>
<dbReference type="SUPFAM" id="SSF54534">
    <property type="entry name" value="FKBP-like"/>
    <property type="match status" value="1"/>
</dbReference>
<dbReference type="SUPFAM" id="SSF109998">
    <property type="entry name" value="Triger factor/SurA peptide-binding domain-like"/>
    <property type="match status" value="1"/>
</dbReference>
<dbReference type="SUPFAM" id="SSF102735">
    <property type="entry name" value="Trigger factor ribosome-binding domain"/>
    <property type="match status" value="1"/>
</dbReference>
<dbReference type="PROSITE" id="PS50059">
    <property type="entry name" value="FKBP_PPIASE"/>
    <property type="match status" value="1"/>
</dbReference>
<feature type="chain" id="PRO_1000022635" description="Trigger factor">
    <location>
        <begin position="1"/>
        <end position="449"/>
    </location>
</feature>
<feature type="domain" description="PPIase FKBP-type" evidence="1">
    <location>
        <begin position="162"/>
        <end position="242"/>
    </location>
</feature>
<feature type="region of interest" description="Disordered" evidence="2">
    <location>
        <begin position="428"/>
        <end position="449"/>
    </location>
</feature>
<feature type="compositionally biased region" description="Low complexity" evidence="2">
    <location>
        <begin position="438"/>
        <end position="449"/>
    </location>
</feature>
<accession>A0LSU9</accession>
<comment type="function">
    <text evidence="1">Involved in protein export. Acts as a chaperone by maintaining the newly synthesized protein in an open conformation. Functions as a peptidyl-prolyl cis-trans isomerase.</text>
</comment>
<comment type="catalytic activity">
    <reaction evidence="1">
        <text>[protein]-peptidylproline (omega=180) = [protein]-peptidylproline (omega=0)</text>
        <dbReference type="Rhea" id="RHEA:16237"/>
        <dbReference type="Rhea" id="RHEA-COMP:10747"/>
        <dbReference type="Rhea" id="RHEA-COMP:10748"/>
        <dbReference type="ChEBI" id="CHEBI:83833"/>
        <dbReference type="ChEBI" id="CHEBI:83834"/>
        <dbReference type="EC" id="5.2.1.8"/>
    </reaction>
</comment>
<comment type="subcellular location">
    <subcellularLocation>
        <location>Cytoplasm</location>
    </subcellularLocation>
    <text evidence="1">About half TF is bound to the ribosome near the polypeptide exit tunnel while the other half is free in the cytoplasm.</text>
</comment>
<comment type="domain">
    <text evidence="1">Consists of 3 domains; the N-terminus binds the ribosome, the middle domain has PPIase activity, while the C-terminus has intrinsic chaperone activity on its own.</text>
</comment>
<comment type="similarity">
    <text evidence="1">Belongs to the FKBP-type PPIase family. Tig subfamily.</text>
</comment>
<evidence type="ECO:0000255" key="1">
    <source>
        <dbReference type="HAMAP-Rule" id="MF_00303"/>
    </source>
</evidence>
<evidence type="ECO:0000256" key="2">
    <source>
        <dbReference type="SAM" id="MobiDB-lite"/>
    </source>
</evidence>
<proteinExistence type="inferred from homology"/>
<reference key="1">
    <citation type="journal article" date="2009" name="Genome Res.">
        <title>Complete genome of the cellulolytic thermophile Acidothermus cellulolyticus 11B provides insights into its ecophysiological and evolutionary adaptations.</title>
        <authorList>
            <person name="Barabote R.D."/>
            <person name="Xie G."/>
            <person name="Leu D.H."/>
            <person name="Normand P."/>
            <person name="Necsulea A."/>
            <person name="Daubin V."/>
            <person name="Medigue C."/>
            <person name="Adney W.S."/>
            <person name="Xu X.C."/>
            <person name="Lapidus A."/>
            <person name="Parales R.E."/>
            <person name="Detter C."/>
            <person name="Pujic P."/>
            <person name="Bruce D."/>
            <person name="Lavire C."/>
            <person name="Challacombe J.F."/>
            <person name="Brettin T.S."/>
            <person name="Berry A.M."/>
        </authorList>
    </citation>
    <scope>NUCLEOTIDE SEQUENCE [LARGE SCALE GENOMIC DNA]</scope>
    <source>
        <strain>ATCC 43068 / DSM 8971 / 11B</strain>
    </source>
</reference>
<keyword id="KW-0131">Cell cycle</keyword>
<keyword id="KW-0132">Cell division</keyword>
<keyword id="KW-0143">Chaperone</keyword>
<keyword id="KW-0963">Cytoplasm</keyword>
<keyword id="KW-0413">Isomerase</keyword>
<keyword id="KW-1185">Reference proteome</keyword>
<keyword id="KW-0697">Rotamase</keyword>
<gene>
    <name evidence="1" type="primary">tig</name>
    <name type="ordered locus">Acel_0736</name>
</gene>
<organism>
    <name type="scientific">Acidothermus cellulolyticus (strain ATCC 43068 / DSM 8971 / 11B)</name>
    <dbReference type="NCBI Taxonomy" id="351607"/>
    <lineage>
        <taxon>Bacteria</taxon>
        <taxon>Bacillati</taxon>
        <taxon>Actinomycetota</taxon>
        <taxon>Actinomycetes</taxon>
        <taxon>Acidothermales</taxon>
        <taxon>Acidothermaceae</taxon>
        <taxon>Acidothermus</taxon>
    </lineage>
</organism>